<name>Y1342_MYCTU</name>
<reference key="1">
    <citation type="journal article" date="1998" name="Nature">
        <title>Deciphering the biology of Mycobacterium tuberculosis from the complete genome sequence.</title>
        <authorList>
            <person name="Cole S.T."/>
            <person name="Brosch R."/>
            <person name="Parkhill J."/>
            <person name="Garnier T."/>
            <person name="Churcher C.M."/>
            <person name="Harris D.E."/>
            <person name="Gordon S.V."/>
            <person name="Eiglmeier K."/>
            <person name="Gas S."/>
            <person name="Barry C.E. III"/>
            <person name="Tekaia F."/>
            <person name="Badcock K."/>
            <person name="Basham D."/>
            <person name="Brown D."/>
            <person name="Chillingworth T."/>
            <person name="Connor R."/>
            <person name="Davies R.M."/>
            <person name="Devlin K."/>
            <person name="Feltwell T."/>
            <person name="Gentles S."/>
            <person name="Hamlin N."/>
            <person name="Holroyd S."/>
            <person name="Hornsby T."/>
            <person name="Jagels K."/>
            <person name="Krogh A."/>
            <person name="McLean J."/>
            <person name="Moule S."/>
            <person name="Murphy L.D."/>
            <person name="Oliver S."/>
            <person name="Osborne J."/>
            <person name="Quail M.A."/>
            <person name="Rajandream M.A."/>
            <person name="Rogers J."/>
            <person name="Rutter S."/>
            <person name="Seeger K."/>
            <person name="Skelton S."/>
            <person name="Squares S."/>
            <person name="Squares R."/>
            <person name="Sulston J.E."/>
            <person name="Taylor K."/>
            <person name="Whitehead S."/>
            <person name="Barrell B.G."/>
        </authorList>
    </citation>
    <scope>NUCLEOTIDE SEQUENCE [LARGE SCALE GENOMIC DNA]</scope>
    <source>
        <strain>ATCC 25618 / H37Rv</strain>
    </source>
</reference>
<reference key="2">
    <citation type="journal article" date="2011" name="Mol. Cell. Proteomics">
        <title>Proteogenomic analysis of Mycobacterium tuberculosis by high resolution mass spectrometry.</title>
        <authorList>
            <person name="Kelkar D.S."/>
            <person name="Kumar D."/>
            <person name="Kumar P."/>
            <person name="Balakrishnan L."/>
            <person name="Muthusamy B."/>
            <person name="Yadav A.K."/>
            <person name="Shrivastava P."/>
            <person name="Marimuthu A."/>
            <person name="Anand S."/>
            <person name="Sundaram H."/>
            <person name="Kingsbury R."/>
            <person name="Harsha H.C."/>
            <person name="Nair B."/>
            <person name="Prasad T.S."/>
            <person name="Chauhan D.S."/>
            <person name="Katoch K."/>
            <person name="Katoch V.M."/>
            <person name="Kumar P."/>
            <person name="Chaerkady R."/>
            <person name="Ramachandran S."/>
            <person name="Dash D."/>
            <person name="Pandey A."/>
        </authorList>
    </citation>
    <scope>ACETYLATION [LARGE SCALE ANALYSIS] AT THR-2</scope>
    <scope>CLEAVAGE OF INITIATOR METHIONINE [LARGE SCALE ANALYSIS]</scope>
    <scope>IDENTIFICATION BY MASS SPECTROMETRY [LARGE SCALE ANALYSIS]</scope>
    <source>
        <strain>ATCC 25618 / H37Rv</strain>
    </source>
</reference>
<dbReference type="EMBL" id="AL123456">
    <property type="protein sequence ID" value="CCP44100.1"/>
    <property type="molecule type" value="Genomic_DNA"/>
</dbReference>
<dbReference type="PIR" id="E70739">
    <property type="entry name" value="E70739"/>
</dbReference>
<dbReference type="RefSeq" id="WP_003406937.1">
    <property type="nucleotide sequence ID" value="NZ_NVQJ01000031.1"/>
</dbReference>
<dbReference type="RefSeq" id="YP_177800.1">
    <property type="nucleotide sequence ID" value="NC_000962.3"/>
</dbReference>
<dbReference type="SMR" id="P9WM19"/>
<dbReference type="STRING" id="83332.Rv1342c"/>
<dbReference type="iPTMnet" id="P9WM19"/>
<dbReference type="PaxDb" id="83332-Rv1342c"/>
<dbReference type="DNASU" id="886862"/>
<dbReference type="GeneID" id="886862"/>
<dbReference type="KEGG" id="mtu:Rv1342c"/>
<dbReference type="KEGG" id="mtv:RVBD_1342c"/>
<dbReference type="TubercuList" id="Rv1342c"/>
<dbReference type="eggNOG" id="ENOG50330UF">
    <property type="taxonomic scope" value="Bacteria"/>
</dbReference>
<dbReference type="InParanoid" id="P9WM19"/>
<dbReference type="OrthoDB" id="9342687at2"/>
<dbReference type="PhylomeDB" id="P9WM19"/>
<dbReference type="Proteomes" id="UP000001584">
    <property type="component" value="Chromosome"/>
</dbReference>
<dbReference type="GO" id="GO:0005886">
    <property type="term" value="C:plasma membrane"/>
    <property type="evidence" value="ECO:0007005"/>
    <property type="project" value="MTBBASE"/>
</dbReference>
<dbReference type="InterPro" id="IPR023845">
    <property type="entry name" value="DUF3817_TM"/>
</dbReference>
<dbReference type="NCBIfam" id="TIGR03954">
    <property type="entry name" value="integ_memb_HG"/>
    <property type="match status" value="1"/>
</dbReference>
<dbReference type="PANTHER" id="PTHR40077:SF2">
    <property type="entry name" value="MEMBRANE PROTEIN"/>
    <property type="match status" value="1"/>
</dbReference>
<dbReference type="PANTHER" id="PTHR40077">
    <property type="entry name" value="MEMBRANE PROTEIN-RELATED"/>
    <property type="match status" value="1"/>
</dbReference>
<dbReference type="Pfam" id="PF12823">
    <property type="entry name" value="DUF3817"/>
    <property type="match status" value="1"/>
</dbReference>
<protein>
    <recommendedName>
        <fullName>Uncharacterized protein Rv1342c</fullName>
    </recommendedName>
</protein>
<evidence type="ECO:0000255" key="1"/>
<evidence type="ECO:0000305" key="2"/>
<evidence type="ECO:0007744" key="3">
    <source>
    </source>
</evidence>
<gene>
    <name type="ordered locus">Rv1342c</name>
    <name type="ORF">MTCY02B10.06c</name>
</gene>
<sequence>MTAPETPAAQHAEPAIAVERIRTALLGYRIMAWTTGLWLIALCYEIVVRYVVKVDNPPTWIGVVHGWVYFTYLLLTLNLAVKVRWPLGKTAGVLLAGTIPLLGIVVEHFQTKEIKARFGL</sequence>
<feature type="initiator methionine" description="Removed" evidence="3">
    <location>
        <position position="1"/>
    </location>
</feature>
<feature type="chain" id="PRO_0000103814" description="Uncharacterized protein Rv1342c">
    <location>
        <begin position="2"/>
        <end position="120"/>
    </location>
</feature>
<feature type="transmembrane region" description="Helical" evidence="1">
    <location>
        <begin position="24"/>
        <end position="44"/>
    </location>
</feature>
<feature type="transmembrane region" description="Helical" evidence="1">
    <location>
        <begin position="61"/>
        <end position="81"/>
    </location>
</feature>
<feature type="transmembrane region" description="Helical" evidence="1">
    <location>
        <begin position="86"/>
        <end position="106"/>
    </location>
</feature>
<feature type="modified residue" description="N-acetylthreonine" evidence="3">
    <location>
        <position position="2"/>
    </location>
</feature>
<proteinExistence type="evidence at protein level"/>
<comment type="subcellular location">
    <subcellularLocation>
        <location evidence="2">Cell membrane</location>
        <topology evidence="2">Multi-pass membrane protein</topology>
    </subcellularLocation>
</comment>
<comment type="similarity">
    <text evidence="2">To M.leprae ML1176.</text>
</comment>
<accession>P9WM19</accession>
<accession>L0T7Z9</accession>
<accession>P0A5E7</accession>
<accession>Q11012</accession>
<organism>
    <name type="scientific">Mycobacterium tuberculosis (strain ATCC 25618 / H37Rv)</name>
    <dbReference type="NCBI Taxonomy" id="83332"/>
    <lineage>
        <taxon>Bacteria</taxon>
        <taxon>Bacillati</taxon>
        <taxon>Actinomycetota</taxon>
        <taxon>Actinomycetes</taxon>
        <taxon>Mycobacteriales</taxon>
        <taxon>Mycobacteriaceae</taxon>
        <taxon>Mycobacterium</taxon>
        <taxon>Mycobacterium tuberculosis complex</taxon>
    </lineage>
</organism>
<keyword id="KW-0007">Acetylation</keyword>
<keyword id="KW-1003">Cell membrane</keyword>
<keyword id="KW-0472">Membrane</keyword>
<keyword id="KW-1185">Reference proteome</keyword>
<keyword id="KW-0812">Transmembrane</keyword>
<keyword id="KW-1133">Transmembrane helix</keyword>